<organism>
    <name type="scientific">Staphylococcus aureus (strain USA300 / TCH1516)</name>
    <dbReference type="NCBI Taxonomy" id="451516"/>
    <lineage>
        <taxon>Bacteria</taxon>
        <taxon>Bacillati</taxon>
        <taxon>Bacillota</taxon>
        <taxon>Bacilli</taxon>
        <taxon>Bacillales</taxon>
        <taxon>Staphylococcaceae</taxon>
        <taxon>Staphylococcus</taxon>
    </lineage>
</organism>
<proteinExistence type="inferred from homology"/>
<keyword id="KW-0028">Amino-acid biosynthesis</keyword>
<keyword id="KW-0963">Cytoplasm</keyword>
<keyword id="KW-0368">Histidine biosynthesis</keyword>
<keyword id="KW-0456">Lyase</keyword>
<dbReference type="EC" id="4.2.1.19" evidence="1"/>
<dbReference type="EMBL" id="CP000730">
    <property type="protein sequence ID" value="ABX30663.1"/>
    <property type="molecule type" value="Genomic_DNA"/>
</dbReference>
<dbReference type="RefSeq" id="WP_000640266.1">
    <property type="nucleotide sequence ID" value="NC_010079.1"/>
</dbReference>
<dbReference type="SMR" id="A8Z5H6"/>
<dbReference type="KEGG" id="sax:USA300HOU_2677"/>
<dbReference type="HOGENOM" id="CLU_044308_3_0_9"/>
<dbReference type="UniPathway" id="UPA00031">
    <property type="reaction ID" value="UER00011"/>
</dbReference>
<dbReference type="GO" id="GO:0005737">
    <property type="term" value="C:cytoplasm"/>
    <property type="evidence" value="ECO:0007669"/>
    <property type="project" value="UniProtKB-SubCell"/>
</dbReference>
<dbReference type="GO" id="GO:0004424">
    <property type="term" value="F:imidazoleglycerol-phosphate dehydratase activity"/>
    <property type="evidence" value="ECO:0007669"/>
    <property type="project" value="UniProtKB-UniRule"/>
</dbReference>
<dbReference type="GO" id="GO:0000105">
    <property type="term" value="P:L-histidine biosynthetic process"/>
    <property type="evidence" value="ECO:0007669"/>
    <property type="project" value="UniProtKB-UniRule"/>
</dbReference>
<dbReference type="CDD" id="cd07914">
    <property type="entry name" value="IGPD"/>
    <property type="match status" value="1"/>
</dbReference>
<dbReference type="FunFam" id="3.30.230.40:FF:000001">
    <property type="entry name" value="Imidazoleglycerol-phosphate dehydratase HisB"/>
    <property type="match status" value="1"/>
</dbReference>
<dbReference type="FunFam" id="3.30.230.40:FF:000003">
    <property type="entry name" value="Imidazoleglycerol-phosphate dehydratase HisB"/>
    <property type="match status" value="1"/>
</dbReference>
<dbReference type="Gene3D" id="3.30.230.40">
    <property type="entry name" value="Imidazole glycerol phosphate dehydratase, domain 1"/>
    <property type="match status" value="2"/>
</dbReference>
<dbReference type="HAMAP" id="MF_00076">
    <property type="entry name" value="HisB"/>
    <property type="match status" value="1"/>
</dbReference>
<dbReference type="InterPro" id="IPR038494">
    <property type="entry name" value="IGPD_sf"/>
</dbReference>
<dbReference type="InterPro" id="IPR000807">
    <property type="entry name" value="ImidazoleglycerolP_deHydtase"/>
</dbReference>
<dbReference type="InterPro" id="IPR020565">
    <property type="entry name" value="ImidazoleglycerP_deHydtase_CS"/>
</dbReference>
<dbReference type="InterPro" id="IPR020568">
    <property type="entry name" value="Ribosomal_Su5_D2-typ_SF"/>
</dbReference>
<dbReference type="NCBIfam" id="NF002107">
    <property type="entry name" value="PRK00951.1-2"/>
    <property type="match status" value="1"/>
</dbReference>
<dbReference type="NCBIfam" id="NF002111">
    <property type="entry name" value="PRK00951.2-1"/>
    <property type="match status" value="1"/>
</dbReference>
<dbReference type="NCBIfam" id="NF002114">
    <property type="entry name" value="PRK00951.2-4"/>
    <property type="match status" value="1"/>
</dbReference>
<dbReference type="PANTHER" id="PTHR23133:SF2">
    <property type="entry name" value="IMIDAZOLEGLYCEROL-PHOSPHATE DEHYDRATASE"/>
    <property type="match status" value="1"/>
</dbReference>
<dbReference type="PANTHER" id="PTHR23133">
    <property type="entry name" value="IMIDAZOLEGLYCEROL-PHOSPHATE DEHYDRATASE HIS7"/>
    <property type="match status" value="1"/>
</dbReference>
<dbReference type="Pfam" id="PF00475">
    <property type="entry name" value="IGPD"/>
    <property type="match status" value="1"/>
</dbReference>
<dbReference type="SUPFAM" id="SSF54211">
    <property type="entry name" value="Ribosomal protein S5 domain 2-like"/>
    <property type="match status" value="2"/>
</dbReference>
<dbReference type="PROSITE" id="PS00954">
    <property type="entry name" value="IGP_DEHYDRATASE_1"/>
    <property type="match status" value="1"/>
</dbReference>
<dbReference type="PROSITE" id="PS00955">
    <property type="entry name" value="IGP_DEHYDRATASE_2"/>
    <property type="match status" value="1"/>
</dbReference>
<accession>A8Z5H6</accession>
<comment type="catalytic activity">
    <reaction evidence="1">
        <text>D-erythro-1-(imidazol-4-yl)glycerol 3-phosphate = 3-(imidazol-4-yl)-2-oxopropyl phosphate + H2O</text>
        <dbReference type="Rhea" id="RHEA:11040"/>
        <dbReference type="ChEBI" id="CHEBI:15377"/>
        <dbReference type="ChEBI" id="CHEBI:57766"/>
        <dbReference type="ChEBI" id="CHEBI:58278"/>
        <dbReference type="EC" id="4.2.1.19"/>
    </reaction>
</comment>
<comment type="pathway">
    <text evidence="1">Amino-acid biosynthesis; L-histidine biosynthesis; L-histidine from 5-phospho-alpha-D-ribose 1-diphosphate: step 6/9.</text>
</comment>
<comment type="subcellular location">
    <subcellularLocation>
        <location evidence="1">Cytoplasm</location>
    </subcellularLocation>
</comment>
<comment type="similarity">
    <text evidence="1">Belongs to the imidazoleglycerol-phosphate dehydratase family.</text>
</comment>
<sequence length="192" mass="21456">MIYQKQRNTAETQLNISISDDQSPSHINTGVGFLNHMLTLFTFHSGLSLNIEAQGDIDVDDHHVTEDIGIVIGQLLLEMIKDKKHFVRYGTMYIPMDETLARVVVDISGRPYLSFNASLSKEKVGTFDTELVEEFFRAVVINARLTTHIDLIRGGNTHHEIEAIFKAFSRALGIALTATDDQRVPSSKGVIE</sequence>
<reference key="1">
    <citation type="journal article" date="2007" name="BMC Microbiol.">
        <title>Subtle genetic changes enhance virulence of methicillin resistant and sensitive Staphylococcus aureus.</title>
        <authorList>
            <person name="Highlander S.K."/>
            <person name="Hulten K.G."/>
            <person name="Qin X."/>
            <person name="Jiang H."/>
            <person name="Yerrapragada S."/>
            <person name="Mason E.O. Jr."/>
            <person name="Shang Y."/>
            <person name="Williams T.M."/>
            <person name="Fortunov R.M."/>
            <person name="Liu Y."/>
            <person name="Igboeli O."/>
            <person name="Petrosino J."/>
            <person name="Tirumalai M."/>
            <person name="Uzman A."/>
            <person name="Fox G.E."/>
            <person name="Cardenas A.M."/>
            <person name="Muzny D.M."/>
            <person name="Hemphill L."/>
            <person name="Ding Y."/>
            <person name="Dugan S."/>
            <person name="Blyth P.R."/>
            <person name="Buhay C.J."/>
            <person name="Dinh H.H."/>
            <person name="Hawes A.C."/>
            <person name="Holder M."/>
            <person name="Kovar C.L."/>
            <person name="Lee S.L."/>
            <person name="Liu W."/>
            <person name="Nazareth L.V."/>
            <person name="Wang Q."/>
            <person name="Zhou J."/>
            <person name="Kaplan S.L."/>
            <person name="Weinstock G.M."/>
        </authorList>
    </citation>
    <scope>NUCLEOTIDE SEQUENCE [LARGE SCALE GENOMIC DNA]</scope>
    <source>
        <strain>USA300 / TCH1516</strain>
    </source>
</reference>
<protein>
    <recommendedName>
        <fullName evidence="1">Imidazoleglycerol-phosphate dehydratase</fullName>
        <shortName evidence="1">IGPD</shortName>
        <ecNumber evidence="1">4.2.1.19</ecNumber>
    </recommendedName>
</protein>
<name>HIS7_STAAT</name>
<feature type="chain" id="PRO_1000075258" description="Imidazoleglycerol-phosphate dehydratase">
    <location>
        <begin position="1"/>
        <end position="192"/>
    </location>
</feature>
<evidence type="ECO:0000255" key="1">
    <source>
        <dbReference type="HAMAP-Rule" id="MF_00076"/>
    </source>
</evidence>
<gene>
    <name evidence="1" type="primary">hisB</name>
    <name type="ordered locus">USA300HOU_2677</name>
</gene>